<keyword id="KW-0029">Amino-acid transport</keyword>
<keyword id="KW-0997">Cell inner membrane</keyword>
<keyword id="KW-1003">Cell membrane</keyword>
<keyword id="KW-0472">Membrane</keyword>
<keyword id="KW-0769">Symport</keyword>
<keyword id="KW-0812">Transmembrane</keyword>
<keyword id="KW-1133">Transmembrane helix</keyword>
<keyword id="KW-0813">Transport</keyword>
<accession>B7I4Z5</accession>
<reference key="1">
    <citation type="journal article" date="2008" name="J. Bacteriol.">
        <title>Comparative genome sequence analysis of multidrug-resistant Acinetobacter baumannii.</title>
        <authorList>
            <person name="Adams M.D."/>
            <person name="Goglin K."/>
            <person name="Molyneaux N."/>
            <person name="Hujer K.M."/>
            <person name="Lavender H."/>
            <person name="Jamison J.J."/>
            <person name="MacDonald I.J."/>
            <person name="Martin K.M."/>
            <person name="Russo T."/>
            <person name="Campagnari A.A."/>
            <person name="Hujer A.M."/>
            <person name="Bonomo R.A."/>
            <person name="Gill S.R."/>
        </authorList>
    </citation>
    <scope>NUCLEOTIDE SEQUENCE [LARGE SCALE GENOMIC DNA]</scope>
    <source>
        <strain>AB0057</strain>
    </source>
</reference>
<name>SSTT_ACIB5</name>
<feature type="chain" id="PRO_1000197544" description="Serine/threonine transporter SstT">
    <location>
        <begin position="1"/>
        <end position="400"/>
    </location>
</feature>
<feature type="transmembrane region" description="Helical" evidence="1">
    <location>
        <begin position="14"/>
        <end position="34"/>
    </location>
</feature>
<feature type="transmembrane region" description="Helical" evidence="1">
    <location>
        <begin position="48"/>
        <end position="68"/>
    </location>
</feature>
<feature type="transmembrane region" description="Helical" evidence="1">
    <location>
        <begin position="76"/>
        <end position="96"/>
    </location>
</feature>
<feature type="transmembrane region" description="Helical" evidence="1">
    <location>
        <begin position="136"/>
        <end position="156"/>
    </location>
</feature>
<feature type="transmembrane region" description="Helical" evidence="1">
    <location>
        <begin position="177"/>
        <end position="197"/>
    </location>
</feature>
<feature type="transmembrane region" description="Helical" evidence="1">
    <location>
        <begin position="211"/>
        <end position="231"/>
    </location>
</feature>
<feature type="transmembrane region" description="Helical" evidence="1">
    <location>
        <begin position="285"/>
        <end position="305"/>
    </location>
</feature>
<feature type="transmembrane region" description="Helical" evidence="1">
    <location>
        <begin position="311"/>
        <end position="331"/>
    </location>
</feature>
<feature type="transmembrane region" description="Helical" evidence="1">
    <location>
        <begin position="349"/>
        <end position="371"/>
    </location>
</feature>
<comment type="function">
    <text evidence="1">Involved in the import of serine and threonine into the cell, with the concomitant import of sodium (symport system).</text>
</comment>
<comment type="catalytic activity">
    <reaction evidence="1">
        <text>L-serine(in) + Na(+)(in) = L-serine(out) + Na(+)(out)</text>
        <dbReference type="Rhea" id="RHEA:29575"/>
        <dbReference type="ChEBI" id="CHEBI:29101"/>
        <dbReference type="ChEBI" id="CHEBI:33384"/>
    </reaction>
    <physiologicalReaction direction="right-to-left" evidence="1">
        <dbReference type="Rhea" id="RHEA:29577"/>
    </physiologicalReaction>
</comment>
<comment type="catalytic activity">
    <reaction evidence="1">
        <text>L-threonine(in) + Na(+)(in) = L-threonine(out) + Na(+)(out)</text>
        <dbReference type="Rhea" id="RHEA:69999"/>
        <dbReference type="ChEBI" id="CHEBI:29101"/>
        <dbReference type="ChEBI" id="CHEBI:57926"/>
    </reaction>
    <physiologicalReaction direction="right-to-left" evidence="1">
        <dbReference type="Rhea" id="RHEA:70001"/>
    </physiologicalReaction>
</comment>
<comment type="subcellular location">
    <subcellularLocation>
        <location evidence="1">Cell inner membrane</location>
        <topology evidence="1">Multi-pass membrane protein</topology>
    </subcellularLocation>
</comment>
<comment type="similarity">
    <text evidence="1">Belongs to the dicarboxylate/amino acid:cation symporter (DAACS) (TC 2.A.23) family.</text>
</comment>
<protein>
    <recommendedName>
        <fullName evidence="1">Serine/threonine transporter SstT</fullName>
    </recommendedName>
    <alternativeName>
        <fullName evidence="1">Na(+)/serine-threonine symporter</fullName>
    </alternativeName>
</protein>
<organism>
    <name type="scientific">Acinetobacter baumannii (strain AB0057)</name>
    <dbReference type="NCBI Taxonomy" id="480119"/>
    <lineage>
        <taxon>Bacteria</taxon>
        <taxon>Pseudomonadati</taxon>
        <taxon>Pseudomonadota</taxon>
        <taxon>Gammaproteobacteria</taxon>
        <taxon>Moraxellales</taxon>
        <taxon>Moraxellaceae</taxon>
        <taxon>Acinetobacter</taxon>
        <taxon>Acinetobacter calcoaceticus/baumannii complex</taxon>
    </lineage>
</organism>
<evidence type="ECO:0000255" key="1">
    <source>
        <dbReference type="HAMAP-Rule" id="MF_01582"/>
    </source>
</evidence>
<gene>
    <name evidence="1" type="primary">sstT</name>
    <name type="ordered locus">AB57_1781</name>
</gene>
<proteinExistence type="inferred from homology"/>
<sequence>MLEFFSRLSLVTKIIIAIILGIGVALLFPTVTPYLSLFGELFIKALKSVAPILVFVLVLSSIANFQVGHSANLRPVLLLYVVGMLLAAFSAVIASLSFPSTLYLNTVSHNNLQAPGSLADILKNLLLSFIANPVQAISEANFIGILAWAIGLGLAMRHSSDTTKQVMQDVSHAVSAIIHKVIAFAPVGIFGLVAVTFADAGLATLESYAQLLVVLLGTMLFVALVINPILVGLTIRGNPYPLVFKCLKESGITAFFTRSSAANIPVNLDLAERLGVNPSTASVSIPLGATVNMAGAAVTITVLTLATVHTLGIHVDLATMIILSVVATISACGASGVAGGSLLLIPVACSLFGISSEIAMQVVAVGMIISVLQDSTETALNSSTDVLFTAAVDIRSRQNS</sequence>
<dbReference type="EMBL" id="CP001182">
    <property type="protein sequence ID" value="ACJ41160.1"/>
    <property type="molecule type" value="Genomic_DNA"/>
</dbReference>
<dbReference type="RefSeq" id="WP_000889009.1">
    <property type="nucleotide sequence ID" value="NC_011586.2"/>
</dbReference>
<dbReference type="SMR" id="B7I4Z5"/>
<dbReference type="KEGG" id="abn:AB57_1781"/>
<dbReference type="HOGENOM" id="CLU_044581_0_0_6"/>
<dbReference type="Proteomes" id="UP000007094">
    <property type="component" value="Chromosome"/>
</dbReference>
<dbReference type="GO" id="GO:0005886">
    <property type="term" value="C:plasma membrane"/>
    <property type="evidence" value="ECO:0007669"/>
    <property type="project" value="UniProtKB-SubCell"/>
</dbReference>
<dbReference type="GO" id="GO:0015171">
    <property type="term" value="F:amino acid transmembrane transporter activity"/>
    <property type="evidence" value="ECO:0007669"/>
    <property type="project" value="UniProtKB-UniRule"/>
</dbReference>
<dbReference type="GO" id="GO:0015293">
    <property type="term" value="F:symporter activity"/>
    <property type="evidence" value="ECO:0007669"/>
    <property type="project" value="UniProtKB-UniRule"/>
</dbReference>
<dbReference type="GO" id="GO:0032329">
    <property type="term" value="P:serine transport"/>
    <property type="evidence" value="ECO:0007669"/>
    <property type="project" value="InterPro"/>
</dbReference>
<dbReference type="GO" id="GO:0015826">
    <property type="term" value="P:threonine transport"/>
    <property type="evidence" value="ECO:0007669"/>
    <property type="project" value="InterPro"/>
</dbReference>
<dbReference type="FunFam" id="1.10.3860.10:FF:000003">
    <property type="entry name" value="Serine/threonine transporter sstT"/>
    <property type="match status" value="1"/>
</dbReference>
<dbReference type="Gene3D" id="1.10.3860.10">
    <property type="entry name" value="Sodium:dicarboxylate symporter"/>
    <property type="match status" value="1"/>
</dbReference>
<dbReference type="HAMAP" id="MF_01582">
    <property type="entry name" value="Ser_Thr_transp_SstT"/>
    <property type="match status" value="1"/>
</dbReference>
<dbReference type="InterPro" id="IPR001991">
    <property type="entry name" value="Na-dicarboxylate_symporter"/>
</dbReference>
<dbReference type="InterPro" id="IPR036458">
    <property type="entry name" value="Na:dicarbo_symporter_sf"/>
</dbReference>
<dbReference type="InterPro" id="IPR023025">
    <property type="entry name" value="Ser_Thr_transp_SstT"/>
</dbReference>
<dbReference type="NCBIfam" id="NF010151">
    <property type="entry name" value="PRK13628.1"/>
    <property type="match status" value="1"/>
</dbReference>
<dbReference type="PANTHER" id="PTHR42865">
    <property type="entry name" value="PROTON/GLUTAMATE-ASPARTATE SYMPORTER"/>
    <property type="match status" value="1"/>
</dbReference>
<dbReference type="PANTHER" id="PTHR42865:SF7">
    <property type="entry name" value="PROTON_GLUTAMATE-ASPARTATE SYMPORTER"/>
    <property type="match status" value="1"/>
</dbReference>
<dbReference type="Pfam" id="PF00375">
    <property type="entry name" value="SDF"/>
    <property type="match status" value="1"/>
</dbReference>
<dbReference type="PRINTS" id="PR00173">
    <property type="entry name" value="EDTRNSPORT"/>
</dbReference>
<dbReference type="SUPFAM" id="SSF118215">
    <property type="entry name" value="Proton glutamate symport protein"/>
    <property type="match status" value="1"/>
</dbReference>